<comment type="subunit">
    <text evidence="4">Homodimer.</text>
</comment>
<comment type="subcellular location">
    <subcellularLocation>
        <location evidence="1">Nucleus</location>
    </subcellularLocation>
</comment>
<comment type="tissue specificity">
    <text evidence="3">Expressed in leaves, stems, and flowers.</text>
</comment>
<comment type="sequence caution" evidence="4">
    <conflict type="erroneous gene model prediction">
        <sequence resource="EMBL-CDS" id="AAG28811"/>
    </conflict>
</comment>
<comment type="sequence caution" evidence="4">
    <conflict type="erroneous termination">
        <sequence resource="EMBL-CDS" id="ABK28414"/>
    </conflict>
    <text>Extended C-terminus.</text>
</comment>
<evidence type="ECO:0000255" key="1">
    <source>
        <dbReference type="PROSITE-ProRule" id="PRU00981"/>
    </source>
</evidence>
<evidence type="ECO:0000256" key="2">
    <source>
        <dbReference type="SAM" id="MobiDB-lite"/>
    </source>
</evidence>
<evidence type="ECO:0000269" key="3">
    <source>
    </source>
</evidence>
<evidence type="ECO:0000305" key="4"/>
<dbReference type="EMBL" id="AC079374">
    <property type="protein sequence ID" value="AAG28811.2"/>
    <property type="status" value="ALT_SEQ"/>
    <property type="molecule type" value="Genomic_DNA"/>
</dbReference>
<dbReference type="EMBL" id="CP002684">
    <property type="protein sequence ID" value="AEE30607.1"/>
    <property type="molecule type" value="Genomic_DNA"/>
</dbReference>
<dbReference type="EMBL" id="DQ446289">
    <property type="protein sequence ID" value="ABE65654.1"/>
    <property type="molecule type" value="mRNA"/>
</dbReference>
<dbReference type="EMBL" id="DQ652859">
    <property type="protein sequence ID" value="ABK28414.1"/>
    <property type="status" value="ALT_SEQ"/>
    <property type="molecule type" value="mRNA"/>
</dbReference>
<dbReference type="EMBL" id="AK175757">
    <property type="protein sequence ID" value="BAD43520.1"/>
    <property type="molecule type" value="mRNA"/>
</dbReference>
<dbReference type="EMBL" id="AY088885">
    <property type="protein sequence ID" value="AAM67191.1"/>
    <property type="molecule type" value="mRNA"/>
</dbReference>
<dbReference type="EMBL" id="AF488607">
    <property type="status" value="NOT_ANNOTATED_CDS"/>
    <property type="molecule type" value="mRNA"/>
</dbReference>
<dbReference type="PIR" id="B86383">
    <property type="entry name" value="B86383"/>
</dbReference>
<dbReference type="PIR" id="D86381">
    <property type="entry name" value="D86381"/>
</dbReference>
<dbReference type="RefSeq" id="NP_564229.1">
    <property type="nucleotide sequence ID" value="NM_102343.4"/>
</dbReference>
<dbReference type="SMR" id="A4D998"/>
<dbReference type="BioGRID" id="24354">
    <property type="interactions" value="2"/>
</dbReference>
<dbReference type="FunCoup" id="A4D998">
    <property type="interactions" value="21"/>
</dbReference>
<dbReference type="IntAct" id="A4D998">
    <property type="interactions" value="3"/>
</dbReference>
<dbReference type="MINT" id="A4D998"/>
<dbReference type="STRING" id="3702.A4D998"/>
<dbReference type="PaxDb" id="3702-AT1G25330.1"/>
<dbReference type="ProteomicsDB" id="241215"/>
<dbReference type="EnsemblPlants" id="AT1G25330.1">
    <property type="protein sequence ID" value="AT1G25330.1"/>
    <property type="gene ID" value="AT1G25330"/>
</dbReference>
<dbReference type="GeneID" id="839117"/>
<dbReference type="Gramene" id="AT1G25330.1">
    <property type="protein sequence ID" value="AT1G25330.1"/>
    <property type="gene ID" value="AT1G25330"/>
</dbReference>
<dbReference type="KEGG" id="ath:AT1G25330"/>
<dbReference type="Araport" id="AT1G25330"/>
<dbReference type="TAIR" id="AT1G25330">
    <property type="gene designation" value="CES"/>
</dbReference>
<dbReference type="eggNOG" id="ENOG502RY3S">
    <property type="taxonomic scope" value="Eukaryota"/>
</dbReference>
<dbReference type="HOGENOM" id="CLU_1241614_0_0_1"/>
<dbReference type="InParanoid" id="A4D998"/>
<dbReference type="OMA" id="HINQTQE"/>
<dbReference type="PhylomeDB" id="A4D998"/>
<dbReference type="PRO" id="PR:A4D998"/>
<dbReference type="Proteomes" id="UP000006548">
    <property type="component" value="Chromosome 1"/>
</dbReference>
<dbReference type="ExpressionAtlas" id="A4D998">
    <property type="expression patterns" value="baseline and differential"/>
</dbReference>
<dbReference type="GO" id="GO:0005634">
    <property type="term" value="C:nucleus"/>
    <property type="evidence" value="ECO:0000314"/>
    <property type="project" value="TAIR"/>
</dbReference>
<dbReference type="GO" id="GO:0003677">
    <property type="term" value="F:DNA binding"/>
    <property type="evidence" value="ECO:0007669"/>
    <property type="project" value="UniProtKB-KW"/>
</dbReference>
<dbReference type="GO" id="GO:0003700">
    <property type="term" value="F:DNA-binding transcription factor activity"/>
    <property type="evidence" value="ECO:0000250"/>
    <property type="project" value="TAIR"/>
</dbReference>
<dbReference type="GO" id="GO:0046983">
    <property type="term" value="F:protein dimerization activity"/>
    <property type="evidence" value="ECO:0007669"/>
    <property type="project" value="InterPro"/>
</dbReference>
<dbReference type="GO" id="GO:2000488">
    <property type="term" value="P:positive regulation of brassinosteroid biosynthetic process"/>
    <property type="evidence" value="ECO:0000315"/>
    <property type="project" value="TAIR"/>
</dbReference>
<dbReference type="GO" id="GO:0006355">
    <property type="term" value="P:regulation of DNA-templated transcription"/>
    <property type="evidence" value="ECO:0000315"/>
    <property type="project" value="TAIR"/>
</dbReference>
<dbReference type="CDD" id="cd18919">
    <property type="entry name" value="bHLH_AtBPE_like"/>
    <property type="match status" value="1"/>
</dbReference>
<dbReference type="FunFam" id="4.10.280.10:FF:000100">
    <property type="entry name" value="Transcription factor BEE 3"/>
    <property type="match status" value="1"/>
</dbReference>
<dbReference type="Gene3D" id="4.10.280.10">
    <property type="entry name" value="Helix-loop-helix DNA-binding domain"/>
    <property type="match status" value="1"/>
</dbReference>
<dbReference type="InterPro" id="IPR011598">
    <property type="entry name" value="bHLH_dom"/>
</dbReference>
<dbReference type="InterPro" id="IPR024097">
    <property type="entry name" value="bHLH_ZIP_TF"/>
</dbReference>
<dbReference type="InterPro" id="IPR036638">
    <property type="entry name" value="HLH_DNA-bd_sf"/>
</dbReference>
<dbReference type="PANTHER" id="PTHR12565">
    <property type="entry name" value="STEROL REGULATORY ELEMENT-BINDING PROTEIN"/>
    <property type="match status" value="1"/>
</dbReference>
<dbReference type="PANTHER" id="PTHR12565:SF367">
    <property type="entry name" value="TRANSCRIPTION FACTOR BHLH75"/>
    <property type="match status" value="1"/>
</dbReference>
<dbReference type="Pfam" id="PF00010">
    <property type="entry name" value="HLH"/>
    <property type="match status" value="1"/>
</dbReference>
<dbReference type="SMART" id="SM00353">
    <property type="entry name" value="HLH"/>
    <property type="match status" value="1"/>
</dbReference>
<dbReference type="SUPFAM" id="SSF47459">
    <property type="entry name" value="HLH, helix-loop-helix DNA-binding domain"/>
    <property type="match status" value="1"/>
</dbReference>
<dbReference type="PROSITE" id="PS50888">
    <property type="entry name" value="BHLH"/>
    <property type="match status" value="1"/>
</dbReference>
<feature type="chain" id="PRO_0000358767" description="Transcription factor bHLH75">
    <location>
        <begin position="1"/>
        <end position="223"/>
    </location>
</feature>
<feature type="domain" description="bHLH" evidence="1">
    <location>
        <begin position="110"/>
        <end position="160"/>
    </location>
</feature>
<feature type="region of interest" description="Disordered" evidence="2">
    <location>
        <begin position="58"/>
        <end position="100"/>
    </location>
</feature>
<feature type="sequence conflict" description="In Ref. 6; AF488607." evidence="4" ref="6">
    <original>L</original>
    <variation>P</variation>
    <location>
        <position position="180"/>
    </location>
</feature>
<name>BH075_ARATH</name>
<protein>
    <recommendedName>
        <fullName>Transcription factor bHLH75</fullName>
    </recommendedName>
    <alternativeName>
        <fullName>Basic helix-loop-helix protein 75</fullName>
        <shortName>AtbHLH75</shortName>
        <shortName>bHLH 75</shortName>
    </alternativeName>
    <alternativeName>
        <fullName>Transcription factor EN 78</fullName>
    </alternativeName>
    <alternativeName>
        <fullName>bHLH transcription factor bHLH075</fullName>
    </alternativeName>
</protein>
<gene>
    <name type="primary">BHLH75</name>
    <name type="synonym">EN78</name>
    <name type="ordered locus">At1g25330</name>
    <name type="ORF">F4F7.28</name>
</gene>
<organism>
    <name type="scientific">Arabidopsis thaliana</name>
    <name type="common">Mouse-ear cress</name>
    <dbReference type="NCBI Taxonomy" id="3702"/>
    <lineage>
        <taxon>Eukaryota</taxon>
        <taxon>Viridiplantae</taxon>
        <taxon>Streptophyta</taxon>
        <taxon>Embryophyta</taxon>
        <taxon>Tracheophyta</taxon>
        <taxon>Spermatophyta</taxon>
        <taxon>Magnoliopsida</taxon>
        <taxon>eudicotyledons</taxon>
        <taxon>Gunneridae</taxon>
        <taxon>Pentapetalae</taxon>
        <taxon>rosids</taxon>
        <taxon>malvids</taxon>
        <taxon>Brassicales</taxon>
        <taxon>Brassicaceae</taxon>
        <taxon>Camelineae</taxon>
        <taxon>Arabidopsis</taxon>
    </lineage>
</organism>
<keyword id="KW-0238">DNA-binding</keyword>
<keyword id="KW-0539">Nucleus</keyword>
<keyword id="KW-1185">Reference proteome</keyword>
<keyword id="KW-0804">Transcription</keyword>
<keyword id="KW-0805">Transcription regulation</keyword>
<reference key="1">
    <citation type="journal article" date="2000" name="Nature">
        <title>Sequence and analysis of chromosome 1 of the plant Arabidopsis thaliana.</title>
        <authorList>
            <person name="Theologis A."/>
            <person name="Ecker J.R."/>
            <person name="Palm C.J."/>
            <person name="Federspiel N.A."/>
            <person name="Kaul S."/>
            <person name="White O."/>
            <person name="Alonso J."/>
            <person name="Altafi H."/>
            <person name="Araujo R."/>
            <person name="Bowman C.L."/>
            <person name="Brooks S.Y."/>
            <person name="Buehler E."/>
            <person name="Chan A."/>
            <person name="Chao Q."/>
            <person name="Chen H."/>
            <person name="Cheuk R.F."/>
            <person name="Chin C.W."/>
            <person name="Chung M.K."/>
            <person name="Conn L."/>
            <person name="Conway A.B."/>
            <person name="Conway A.R."/>
            <person name="Creasy T.H."/>
            <person name="Dewar K."/>
            <person name="Dunn P."/>
            <person name="Etgu P."/>
            <person name="Feldblyum T.V."/>
            <person name="Feng J.-D."/>
            <person name="Fong B."/>
            <person name="Fujii C.Y."/>
            <person name="Gill J.E."/>
            <person name="Goldsmith A.D."/>
            <person name="Haas B."/>
            <person name="Hansen N.F."/>
            <person name="Hughes B."/>
            <person name="Huizar L."/>
            <person name="Hunter J.L."/>
            <person name="Jenkins J."/>
            <person name="Johnson-Hopson C."/>
            <person name="Khan S."/>
            <person name="Khaykin E."/>
            <person name="Kim C.J."/>
            <person name="Koo H.L."/>
            <person name="Kremenetskaia I."/>
            <person name="Kurtz D.B."/>
            <person name="Kwan A."/>
            <person name="Lam B."/>
            <person name="Langin-Hooper S."/>
            <person name="Lee A."/>
            <person name="Lee J.M."/>
            <person name="Lenz C.A."/>
            <person name="Li J.H."/>
            <person name="Li Y.-P."/>
            <person name="Lin X."/>
            <person name="Liu S.X."/>
            <person name="Liu Z.A."/>
            <person name="Luros J.S."/>
            <person name="Maiti R."/>
            <person name="Marziali A."/>
            <person name="Militscher J."/>
            <person name="Miranda M."/>
            <person name="Nguyen M."/>
            <person name="Nierman W.C."/>
            <person name="Osborne B.I."/>
            <person name="Pai G."/>
            <person name="Peterson J."/>
            <person name="Pham P.K."/>
            <person name="Rizzo M."/>
            <person name="Rooney T."/>
            <person name="Rowley D."/>
            <person name="Sakano H."/>
            <person name="Salzberg S.L."/>
            <person name="Schwartz J.R."/>
            <person name="Shinn P."/>
            <person name="Southwick A.M."/>
            <person name="Sun H."/>
            <person name="Tallon L.J."/>
            <person name="Tambunga G."/>
            <person name="Toriumi M.J."/>
            <person name="Town C.D."/>
            <person name="Utterback T."/>
            <person name="Van Aken S."/>
            <person name="Vaysberg M."/>
            <person name="Vysotskaia V.S."/>
            <person name="Walker M."/>
            <person name="Wu D."/>
            <person name="Yu G."/>
            <person name="Fraser C.M."/>
            <person name="Venter J.C."/>
            <person name="Davis R.W."/>
        </authorList>
    </citation>
    <scope>NUCLEOTIDE SEQUENCE [LARGE SCALE GENOMIC DNA]</scope>
    <source>
        <strain>cv. Columbia</strain>
    </source>
</reference>
<reference key="2">
    <citation type="journal article" date="2017" name="Plant J.">
        <title>Araport11: a complete reannotation of the Arabidopsis thaliana reference genome.</title>
        <authorList>
            <person name="Cheng C.Y."/>
            <person name="Krishnakumar V."/>
            <person name="Chan A.P."/>
            <person name="Thibaud-Nissen F."/>
            <person name="Schobel S."/>
            <person name="Town C.D."/>
        </authorList>
    </citation>
    <scope>GENOME REANNOTATION</scope>
    <source>
        <strain>cv. Columbia</strain>
    </source>
</reference>
<reference key="3">
    <citation type="journal article" date="2006" name="Plant Biotechnol. J.">
        <title>Simultaneous high-throughput recombinational cloning of open reading frames in closed and open configurations.</title>
        <authorList>
            <person name="Underwood B.A."/>
            <person name="Vanderhaeghen R."/>
            <person name="Whitford R."/>
            <person name="Town C.D."/>
            <person name="Hilson P."/>
        </authorList>
    </citation>
    <scope>NUCLEOTIDE SEQUENCE [LARGE SCALE MRNA]</scope>
    <source>
        <strain>cv. Columbia</strain>
    </source>
</reference>
<reference key="4">
    <citation type="submission" date="2004-09" db="EMBL/GenBank/DDBJ databases">
        <title>Large-scale analysis of RIKEN Arabidopsis full-length (RAFL) cDNAs.</title>
        <authorList>
            <person name="Totoki Y."/>
            <person name="Seki M."/>
            <person name="Ishida J."/>
            <person name="Nakajima M."/>
            <person name="Enju A."/>
            <person name="Kamiya A."/>
            <person name="Narusaka M."/>
            <person name="Shin-i T."/>
            <person name="Nakagawa M."/>
            <person name="Sakamoto N."/>
            <person name="Oishi K."/>
            <person name="Kohara Y."/>
            <person name="Kobayashi M."/>
            <person name="Toyoda A."/>
            <person name="Sakaki Y."/>
            <person name="Sakurai T."/>
            <person name="Iida K."/>
            <person name="Akiyama K."/>
            <person name="Satou M."/>
            <person name="Toyoda T."/>
            <person name="Konagaya A."/>
            <person name="Carninci P."/>
            <person name="Kawai J."/>
            <person name="Hayashizaki Y."/>
            <person name="Shinozaki K."/>
        </authorList>
    </citation>
    <scope>NUCLEOTIDE SEQUENCE [LARGE SCALE MRNA]</scope>
    <source>
        <strain>cv. Columbia</strain>
    </source>
</reference>
<reference key="5">
    <citation type="submission" date="2002-03" db="EMBL/GenBank/DDBJ databases">
        <title>Full-length cDNA from Arabidopsis thaliana.</title>
        <authorList>
            <person name="Brover V.V."/>
            <person name="Troukhan M.E."/>
            <person name="Alexandrov N.A."/>
            <person name="Lu Y.-P."/>
            <person name="Flavell R.B."/>
            <person name="Feldmann K.A."/>
        </authorList>
    </citation>
    <scope>NUCLEOTIDE SEQUENCE [LARGE SCALE MRNA]</scope>
</reference>
<reference key="6">
    <citation type="journal article" date="2003" name="Mol. Biol. Evol.">
        <title>The basic helix-loop-helix transcription factor family in plants: a genome-wide study of protein structure and functional diversity.</title>
        <authorList>
            <person name="Heim M.A."/>
            <person name="Jakoby M."/>
            <person name="Werber M."/>
            <person name="Martin C."/>
            <person name="Weisshaar B."/>
            <person name="Bailey P.C."/>
        </authorList>
    </citation>
    <scope>NUCLEOTIDE SEQUENCE [MRNA] OF 131-223</scope>
    <scope>TISSUE SPECIFICITY</scope>
    <scope>GENE FAMILY</scope>
    <scope>NOMENCLATURE</scope>
    <source>
        <strain>cv. Columbia</strain>
    </source>
</reference>
<reference key="7">
    <citation type="journal article" date="2003" name="Plant Cell">
        <title>The Arabidopsis basic/helix-loop-helix transcription factor family.</title>
        <authorList>
            <person name="Toledo-Ortiz G."/>
            <person name="Huq E."/>
            <person name="Quail P.H."/>
        </authorList>
    </citation>
    <scope>GENE FAMILY</scope>
</reference>
<reference key="8">
    <citation type="journal article" date="2003" name="Plant Cell">
        <title>Update on the basic helix-loop-helix transcription factor gene family in Arabidopsis thaliana.</title>
        <authorList>
            <person name="Bailey P.C."/>
            <person name="Martin C."/>
            <person name="Toledo-Ortiz G."/>
            <person name="Quail P.H."/>
            <person name="Huq E."/>
            <person name="Heim M.A."/>
            <person name="Jakoby M."/>
            <person name="Werber M."/>
            <person name="Weisshaar B."/>
        </authorList>
    </citation>
    <scope>GENE FAMILY</scope>
    <scope>NOMENCLATURE</scope>
</reference>
<proteinExistence type="evidence at transcript level"/>
<accession>A4D998</accession>
<accession>A0ME91</accession>
<accession>Q9FRI2</accession>
<sequence length="223" mass="25209">MARFEPYNYNNGHDPFFAHINQNPELINLDLPASTPSSFMLFSNGALVDANHNNSHFFPNLLHGNTRRKGNKEESGSKRRRKRSEEEEAMNGDETQKPKDVVHVRAKRGQATDSHSLAERVRREKINERLKCLQDLVPGCYKAMGMAVMLDVIIDYVRSLQNQIEFLSMKLSAASACYDLNSLDIEPTDIFQGGNIHSAAEMERILRESVGTQPPNFSSTLPF</sequence>